<evidence type="ECO:0000255" key="1">
    <source>
        <dbReference type="HAMAP-Rule" id="MF_00665"/>
    </source>
</evidence>
<evidence type="ECO:0000256" key="2">
    <source>
        <dbReference type="SAM" id="MobiDB-lite"/>
    </source>
</evidence>
<organism>
    <name type="scientific">Anoxybacillus flavithermus (strain DSM 21510 / WK1)</name>
    <dbReference type="NCBI Taxonomy" id="491915"/>
    <lineage>
        <taxon>Bacteria</taxon>
        <taxon>Bacillati</taxon>
        <taxon>Bacillota</taxon>
        <taxon>Bacilli</taxon>
        <taxon>Bacillales</taxon>
        <taxon>Anoxybacillaceae</taxon>
        <taxon>Anoxybacillus</taxon>
    </lineage>
</organism>
<comment type="subcellular location">
    <subcellularLocation>
        <location evidence="1">Spore core</location>
    </subcellularLocation>
</comment>
<comment type="induction">
    <text evidence="1">Expressed only in the forespore compartment of sporulating cells.</text>
</comment>
<comment type="similarity">
    <text evidence="1">Belongs to the SspO family.</text>
</comment>
<feature type="chain" id="PRO_1000131496" description="Small, acid-soluble spore protein O">
    <location>
        <begin position="1"/>
        <end position="49"/>
    </location>
</feature>
<feature type="region of interest" description="Disordered" evidence="2">
    <location>
        <begin position="1"/>
        <end position="49"/>
    </location>
</feature>
<gene>
    <name evidence="1" type="primary">sspO</name>
    <name type="ordered locus">Aflv_1493</name>
</gene>
<keyword id="KW-0749">Sporulation</keyword>
<accession>B7GI77</accession>
<reference key="1">
    <citation type="journal article" date="2008" name="Genome Biol.">
        <title>Encapsulated in silica: genome, proteome and physiology of the thermophilic bacterium Anoxybacillus flavithermus WK1.</title>
        <authorList>
            <person name="Saw J.H."/>
            <person name="Mountain B.W."/>
            <person name="Feng L."/>
            <person name="Omelchenko M.V."/>
            <person name="Hou S."/>
            <person name="Saito J.A."/>
            <person name="Stott M.B."/>
            <person name="Li D."/>
            <person name="Zhao G."/>
            <person name="Wu J."/>
            <person name="Galperin M.Y."/>
            <person name="Koonin E.V."/>
            <person name="Makarova K.S."/>
            <person name="Wolf Y.I."/>
            <person name="Rigden D.J."/>
            <person name="Dunfield P.F."/>
            <person name="Wang L."/>
            <person name="Alam M."/>
        </authorList>
    </citation>
    <scope>NUCLEOTIDE SEQUENCE [LARGE SCALE GENOMIC DNA]</scope>
    <source>
        <strain>DSM 21510 / WK1</strain>
    </source>
</reference>
<name>SSPO_ANOFW</name>
<protein>
    <recommendedName>
        <fullName evidence="1">Small, acid-soluble spore protein O</fullName>
        <shortName evidence="1">SASP O</shortName>
    </recommendedName>
</protein>
<sequence length="49" mass="5452">MVKRKANHVIPGMNDASAQGKGAGYNEELSNEPLTEAQKQNNKKRKKNQ</sequence>
<dbReference type="EMBL" id="CP000922">
    <property type="protein sequence ID" value="ACJ33859.1"/>
    <property type="molecule type" value="Genomic_DNA"/>
</dbReference>
<dbReference type="RefSeq" id="WP_004890592.1">
    <property type="nucleotide sequence ID" value="NC_011567.1"/>
</dbReference>
<dbReference type="STRING" id="491915.Aflv_1493"/>
<dbReference type="GeneID" id="7037748"/>
<dbReference type="KEGG" id="afl:Aflv_1493"/>
<dbReference type="eggNOG" id="ENOG5033BZS">
    <property type="taxonomic scope" value="Bacteria"/>
</dbReference>
<dbReference type="HOGENOM" id="CLU_206342_0_0_9"/>
<dbReference type="Proteomes" id="UP000000742">
    <property type="component" value="Chromosome"/>
</dbReference>
<dbReference type="GO" id="GO:0042601">
    <property type="term" value="C:endospore-forming forespore"/>
    <property type="evidence" value="ECO:0007669"/>
    <property type="project" value="InterPro"/>
</dbReference>
<dbReference type="GO" id="GO:0030436">
    <property type="term" value="P:asexual sporulation"/>
    <property type="evidence" value="ECO:0007669"/>
    <property type="project" value="UniProtKB-UniRule"/>
</dbReference>
<dbReference type="GO" id="GO:0030435">
    <property type="term" value="P:sporulation resulting in formation of a cellular spore"/>
    <property type="evidence" value="ECO:0007669"/>
    <property type="project" value="UniProtKB-KW"/>
</dbReference>
<dbReference type="HAMAP" id="MF_00665">
    <property type="entry name" value="SspO"/>
    <property type="match status" value="1"/>
</dbReference>
<dbReference type="InterPro" id="IPR012613">
    <property type="entry name" value="SASP_SspO"/>
</dbReference>
<dbReference type="NCBIfam" id="TIGR02864">
    <property type="entry name" value="spore_sspO"/>
    <property type="match status" value="1"/>
</dbReference>
<dbReference type="Pfam" id="PF08175">
    <property type="entry name" value="SspO"/>
    <property type="match status" value="1"/>
</dbReference>
<proteinExistence type="inferred from homology"/>